<name>DF180_ARATH</name>
<proteinExistence type="inferred from homology"/>
<dbReference type="EMBL" id="AB011481">
    <property type="status" value="NOT_ANNOTATED_CDS"/>
    <property type="molecule type" value="Genomic_DNA"/>
</dbReference>
<dbReference type="EMBL" id="CP002688">
    <property type="protein sequence ID" value="AED94295.1"/>
    <property type="molecule type" value="Genomic_DNA"/>
</dbReference>
<dbReference type="RefSeq" id="NP_001031979.1">
    <property type="nucleotide sequence ID" value="NM_001036902.1"/>
</dbReference>
<dbReference type="PaxDb" id="3702-AT5G38317.1"/>
<dbReference type="EnsemblPlants" id="AT5G38317.1">
    <property type="protein sequence ID" value="AT5G38317.1"/>
    <property type="gene ID" value="AT5G38317"/>
</dbReference>
<dbReference type="GeneID" id="3771358"/>
<dbReference type="Gramene" id="AT5G38317.1">
    <property type="protein sequence ID" value="AT5G38317.1"/>
    <property type="gene ID" value="AT5G38317"/>
</dbReference>
<dbReference type="KEGG" id="ath:AT5G38317"/>
<dbReference type="Araport" id="AT5G38317"/>
<dbReference type="TAIR" id="AT5G38317">
    <property type="gene designation" value="LCR58"/>
</dbReference>
<dbReference type="eggNOG" id="ENOG502SD1Z">
    <property type="taxonomic scope" value="Eukaryota"/>
</dbReference>
<dbReference type="HOGENOM" id="CLU_158287_1_1_1"/>
<dbReference type="InParanoid" id="P82772"/>
<dbReference type="OMA" id="CETCDER"/>
<dbReference type="PhylomeDB" id="P82772"/>
<dbReference type="PRO" id="PR:P82772"/>
<dbReference type="Proteomes" id="UP000006548">
    <property type="component" value="Chromosome 5"/>
</dbReference>
<dbReference type="ExpressionAtlas" id="P82772">
    <property type="expression patterns" value="baseline"/>
</dbReference>
<dbReference type="GO" id="GO:0005576">
    <property type="term" value="C:extracellular region"/>
    <property type="evidence" value="ECO:0007669"/>
    <property type="project" value="UniProtKB-SubCell"/>
</dbReference>
<dbReference type="GO" id="GO:0050832">
    <property type="term" value="P:defense response to fungus"/>
    <property type="evidence" value="ECO:0007669"/>
    <property type="project" value="UniProtKB-KW"/>
</dbReference>
<dbReference type="GO" id="GO:0031640">
    <property type="term" value="P:killing of cells of another organism"/>
    <property type="evidence" value="ECO:0007669"/>
    <property type="project" value="UniProtKB-KW"/>
</dbReference>
<dbReference type="InterPro" id="IPR039641">
    <property type="entry name" value="LCR"/>
</dbReference>
<dbReference type="PANTHER" id="PTHR36788:SF4">
    <property type="entry name" value="DEFENSIN-LIKE PROTEIN 181-RELATED"/>
    <property type="match status" value="1"/>
</dbReference>
<dbReference type="PANTHER" id="PTHR36788">
    <property type="entry name" value="DEFENSIN-LIKE PROTEIN 183"/>
    <property type="match status" value="1"/>
</dbReference>
<protein>
    <recommendedName>
        <fullName>Putative defensin-like protein 180</fullName>
    </recommendedName>
    <alternativeName>
        <fullName>Putative low-molecular-weight cysteine-rich protein 58</fullName>
        <shortName>Protein LCR58</shortName>
    </alternativeName>
</protein>
<keyword id="KW-0929">Antimicrobial</keyword>
<keyword id="KW-1015">Disulfide bond</keyword>
<keyword id="KW-0295">Fungicide</keyword>
<keyword id="KW-0611">Plant defense</keyword>
<keyword id="KW-1185">Reference proteome</keyword>
<keyword id="KW-0964">Secreted</keyword>
<keyword id="KW-0732">Signal</keyword>
<comment type="subcellular location">
    <subcellularLocation>
        <location evidence="1">Secreted</location>
    </subcellularLocation>
</comment>
<comment type="similarity">
    <text evidence="3">Belongs to the DEFL family.</text>
</comment>
<comment type="caution">
    <text evidence="3">Contains 8 disulfide bonds instead of the 4 disulfide bonds, which are conserved features of the family.</text>
</comment>
<organism evidence="3">
    <name type="scientific">Arabidopsis thaliana</name>
    <name type="common">Mouse-ear cress</name>
    <dbReference type="NCBI Taxonomy" id="3702"/>
    <lineage>
        <taxon>Eukaryota</taxon>
        <taxon>Viridiplantae</taxon>
        <taxon>Streptophyta</taxon>
        <taxon>Embryophyta</taxon>
        <taxon>Tracheophyta</taxon>
        <taxon>Spermatophyta</taxon>
        <taxon>Magnoliopsida</taxon>
        <taxon>eudicotyledons</taxon>
        <taxon>Gunneridae</taxon>
        <taxon>Pentapetalae</taxon>
        <taxon>rosids</taxon>
        <taxon>malvids</taxon>
        <taxon>Brassicales</taxon>
        <taxon>Brassicaceae</taxon>
        <taxon>Camelineae</taxon>
        <taxon>Arabidopsis</taxon>
    </lineage>
</organism>
<gene>
    <name type="primary">LCR58</name>
    <name type="ordered locus">At5g38317</name>
    <name type="ORF">MSI17</name>
</gene>
<feature type="signal peptide" evidence="2">
    <location>
        <begin position="1"/>
        <end position="26"/>
    </location>
</feature>
<feature type="chain" id="PRO_0000017296" description="Putative defensin-like protein 180">
    <location>
        <begin position="27"/>
        <end position="127"/>
    </location>
</feature>
<feature type="disulfide bond" evidence="1">
    <location>
        <begin position="29"/>
        <end position="70"/>
    </location>
</feature>
<feature type="disulfide bond" evidence="1">
    <location>
        <begin position="36"/>
        <end position="55"/>
    </location>
</feature>
<feature type="disulfide bond" evidence="1">
    <location>
        <begin position="39"/>
        <end position="64"/>
    </location>
</feature>
<feature type="disulfide bond" evidence="1">
    <location>
        <begin position="43"/>
        <end position="66"/>
    </location>
</feature>
<feature type="disulfide bond" evidence="1">
    <location>
        <begin position="81"/>
        <end position="127"/>
    </location>
</feature>
<feature type="disulfide bond" evidence="1">
    <location>
        <begin position="92"/>
        <end position="112"/>
    </location>
</feature>
<feature type="disulfide bond" evidence="1">
    <location>
        <begin position="97"/>
        <end position="121"/>
    </location>
</feature>
<feature type="disulfide bond" evidence="1">
    <location>
        <begin position="101"/>
        <end position="123"/>
    </location>
</feature>
<accession>P82772</accession>
<evidence type="ECO:0000250" key="1"/>
<evidence type="ECO:0000255" key="2"/>
<evidence type="ECO:0000305" key="3"/>
<reference evidence="3" key="1">
    <citation type="journal article" date="1998" name="DNA Res.">
        <title>Structural analysis of Arabidopsis thaliana chromosome 5. V. Sequence features of the regions of 1,381,565 bp covered by twenty one physically assigned P1 and TAC clones.</title>
        <authorList>
            <person name="Kaneko T."/>
            <person name="Kotani H."/>
            <person name="Nakamura Y."/>
            <person name="Sato S."/>
            <person name="Asamizu E."/>
            <person name="Miyajima N."/>
            <person name="Tabata S."/>
        </authorList>
    </citation>
    <scope>NUCLEOTIDE SEQUENCE [LARGE SCALE GENOMIC DNA]</scope>
    <source>
        <strain>cv. Columbia</strain>
    </source>
</reference>
<reference key="2">
    <citation type="journal article" date="2017" name="Plant J.">
        <title>Araport11: a complete reannotation of the Arabidopsis thaliana reference genome.</title>
        <authorList>
            <person name="Cheng C.Y."/>
            <person name="Krishnakumar V."/>
            <person name="Chan A.P."/>
            <person name="Thibaud-Nissen F."/>
            <person name="Schobel S."/>
            <person name="Town C.D."/>
        </authorList>
    </citation>
    <scope>GENOME REANNOTATION</scope>
    <source>
        <strain>cv. Columbia</strain>
    </source>
</reference>
<reference evidence="3" key="3">
    <citation type="journal article" date="2001" name="Plant Mol. Biol.">
        <title>Two large Arabidopsis thaliana gene families are homologous to the Brassica gene superfamily that encodes pollen coat proteins and the male component of the self-incompatibility response.</title>
        <authorList>
            <person name="Vanoosthuyse V."/>
            <person name="Miege C."/>
            <person name="Dumas C."/>
            <person name="Cock J.M."/>
        </authorList>
    </citation>
    <scope>IDENTIFICATION</scope>
</reference>
<reference key="4">
    <citation type="journal article" date="2005" name="Plant Physiol.">
        <title>Genome organization of more than 300 defensin-like genes in Arabidopsis.</title>
        <authorList>
            <person name="Silverstein K.A.T."/>
            <person name="Graham M.A."/>
            <person name="Paape T.D."/>
            <person name="VandenBosch K.A."/>
        </authorList>
    </citation>
    <scope>GENE FAMILY</scope>
</reference>
<sequence length="127" mass="13625">MERITSLVFFASFLIIFVSGVNQTRADSCDESLGLCETCDERCQAKHGPSCISKCDGEVGMLSCTCTYECGPPLPPKGNVCSGGTGMCSGKCPYKCCDTSCAQKYNGGRGFCNSFGNYNFCQCEYPC</sequence>